<comment type="subcellular location">
    <subcellularLocation>
        <location>Plastid</location>
        <location>Chloroplast</location>
    </subcellularLocation>
</comment>
<comment type="similarity">
    <text evidence="1">Belongs to the universal ribosomal protein uS2 family.</text>
</comment>
<comment type="sequence caution" evidence="1">
    <conflict type="erroneous initiation">
        <sequence resource="EMBL-CDS" id="AAS46114"/>
    </conflict>
</comment>
<proteinExistence type="inferred from homology"/>
<keyword id="KW-0150">Chloroplast</keyword>
<keyword id="KW-0934">Plastid</keyword>
<keyword id="KW-1185">Reference proteome</keyword>
<keyword id="KW-0687">Ribonucleoprotein</keyword>
<keyword id="KW-0689">Ribosomal protein</keyword>
<feature type="chain" id="PRO_0000290080" description="Small ribosomal subunit protein uS2c">
    <location>
        <begin position="1"/>
        <end position="236"/>
    </location>
</feature>
<dbReference type="EMBL" id="X15901">
    <property type="protein sequence ID" value="CAA33989.1"/>
    <property type="molecule type" value="Genomic_DNA"/>
</dbReference>
<dbReference type="EMBL" id="AY522330">
    <property type="protein sequence ID" value="AAS46114.1"/>
    <property type="status" value="ALT_INIT"/>
    <property type="molecule type" value="Genomic_DNA"/>
</dbReference>
<dbReference type="PIR" id="JQ0216">
    <property type="entry name" value="R3RZ2"/>
</dbReference>
<dbReference type="RefSeq" id="NP_039376.1">
    <property type="nucleotide sequence ID" value="NC_001320.1"/>
</dbReference>
<dbReference type="SMR" id="P0C482"/>
<dbReference type="FunCoup" id="P0C482">
    <property type="interactions" value="838"/>
</dbReference>
<dbReference type="STRING" id="39947.P0C482"/>
<dbReference type="PaxDb" id="39947-P0C482"/>
<dbReference type="EnsemblPlants" id="transcript-rps2">
    <property type="protein sequence ID" value="cds-CAA33989.1"/>
    <property type="gene ID" value="gene-rps2"/>
</dbReference>
<dbReference type="GeneID" id="3131442"/>
<dbReference type="Gramene" id="transcript-rps2">
    <property type="protein sequence ID" value="cds-CAA33989.1"/>
    <property type="gene ID" value="gene-rps2"/>
</dbReference>
<dbReference type="KEGG" id="osa:3131442"/>
<dbReference type="InParanoid" id="P0C482"/>
<dbReference type="OrthoDB" id="773813at2759"/>
<dbReference type="Proteomes" id="UP000059680">
    <property type="component" value="Chloroplast"/>
</dbReference>
<dbReference type="GO" id="GO:0009507">
    <property type="term" value="C:chloroplast"/>
    <property type="evidence" value="ECO:0007669"/>
    <property type="project" value="UniProtKB-SubCell"/>
</dbReference>
<dbReference type="GO" id="GO:0005763">
    <property type="term" value="C:mitochondrial small ribosomal subunit"/>
    <property type="evidence" value="ECO:0000318"/>
    <property type="project" value="GO_Central"/>
</dbReference>
<dbReference type="GO" id="GO:0009536">
    <property type="term" value="C:plastid"/>
    <property type="evidence" value="ECO:0000305"/>
    <property type="project" value="Gramene"/>
</dbReference>
<dbReference type="GO" id="GO:0003735">
    <property type="term" value="F:structural constituent of ribosome"/>
    <property type="evidence" value="ECO:0000318"/>
    <property type="project" value="GO_Central"/>
</dbReference>
<dbReference type="GO" id="GO:0006412">
    <property type="term" value="P:translation"/>
    <property type="evidence" value="ECO:0007669"/>
    <property type="project" value="UniProtKB-UniRule"/>
</dbReference>
<dbReference type="CDD" id="cd01425">
    <property type="entry name" value="RPS2"/>
    <property type="match status" value="1"/>
</dbReference>
<dbReference type="FunFam" id="1.10.287.610:FF:000001">
    <property type="entry name" value="30S ribosomal protein S2"/>
    <property type="match status" value="1"/>
</dbReference>
<dbReference type="Gene3D" id="3.40.50.10490">
    <property type="entry name" value="Glucose-6-phosphate isomerase like protein, domain 1"/>
    <property type="match status" value="1"/>
</dbReference>
<dbReference type="Gene3D" id="1.10.287.610">
    <property type="entry name" value="Helix hairpin bin"/>
    <property type="match status" value="1"/>
</dbReference>
<dbReference type="HAMAP" id="MF_00291_B">
    <property type="entry name" value="Ribosomal_uS2_B"/>
    <property type="match status" value="1"/>
</dbReference>
<dbReference type="InterPro" id="IPR001865">
    <property type="entry name" value="Ribosomal_uS2"/>
</dbReference>
<dbReference type="InterPro" id="IPR005706">
    <property type="entry name" value="Ribosomal_uS2_bac/mit/plastid"/>
</dbReference>
<dbReference type="InterPro" id="IPR018130">
    <property type="entry name" value="Ribosomal_uS2_CS"/>
</dbReference>
<dbReference type="InterPro" id="IPR023591">
    <property type="entry name" value="Ribosomal_uS2_flav_dom_sf"/>
</dbReference>
<dbReference type="NCBIfam" id="TIGR01011">
    <property type="entry name" value="rpsB_bact"/>
    <property type="match status" value="1"/>
</dbReference>
<dbReference type="PANTHER" id="PTHR12534">
    <property type="entry name" value="30S RIBOSOMAL PROTEIN S2 PROKARYOTIC AND ORGANELLAR"/>
    <property type="match status" value="1"/>
</dbReference>
<dbReference type="PANTHER" id="PTHR12534:SF0">
    <property type="entry name" value="SMALL RIBOSOMAL SUBUNIT PROTEIN US2M"/>
    <property type="match status" value="1"/>
</dbReference>
<dbReference type="Pfam" id="PF00318">
    <property type="entry name" value="Ribosomal_S2"/>
    <property type="match status" value="1"/>
</dbReference>
<dbReference type="PRINTS" id="PR00395">
    <property type="entry name" value="RIBOSOMALS2"/>
</dbReference>
<dbReference type="SUPFAM" id="SSF52313">
    <property type="entry name" value="Ribosomal protein S2"/>
    <property type="match status" value="1"/>
</dbReference>
<dbReference type="PROSITE" id="PS00962">
    <property type="entry name" value="RIBOSOMAL_S2_1"/>
    <property type="match status" value="1"/>
</dbReference>
<dbReference type="PROSITE" id="PS00963">
    <property type="entry name" value="RIBOSOMAL_S2_2"/>
    <property type="match status" value="1"/>
</dbReference>
<reference key="1">
    <citation type="journal article" date="1989" name="Mol. Gen. Genet.">
        <title>The complete sequence of the rice (Oryza sativa) chloroplast genome: intermolecular recombination between distinct tRNA genes accounts for a major plastid DNA inversion during the evolution of the cereals.</title>
        <authorList>
            <person name="Hiratsuka J."/>
            <person name="Shimada H."/>
            <person name="Whittier R."/>
            <person name="Ishibashi T."/>
            <person name="Sakamoto M."/>
            <person name="Mori M."/>
            <person name="Kondo C."/>
            <person name="Honji Y."/>
            <person name="Sun C.-R."/>
            <person name="Meng B.-Y."/>
            <person name="Li Y.-Q."/>
            <person name="Kanno A."/>
            <person name="Nishizawa Y."/>
            <person name="Hirai A."/>
            <person name="Shinozaki K."/>
            <person name="Sugiura M."/>
        </authorList>
    </citation>
    <scope>NUCLEOTIDE SEQUENCE [LARGE SCALE GENOMIC DNA]</scope>
    <source>
        <strain>cv. Nipponbare</strain>
    </source>
</reference>
<reference key="2">
    <citation type="journal article" date="2004" name="Plant Physiol.">
        <title>A comparison of rice chloroplast genomes.</title>
        <authorList>
            <person name="Tang J."/>
            <person name="Xia H."/>
            <person name="Cao M."/>
            <person name="Zhang X."/>
            <person name="Zeng W."/>
            <person name="Hu S."/>
            <person name="Tong W."/>
            <person name="Wang J."/>
            <person name="Wang J."/>
            <person name="Yu J."/>
            <person name="Yang H."/>
            <person name="Zhu L."/>
        </authorList>
    </citation>
    <scope>NUCLEOTIDE SEQUENCE [LARGE SCALE GENOMIC DNA]</scope>
    <source>
        <strain>cv. Nipponbare</strain>
    </source>
</reference>
<sequence length="236" mass="26993">MTRRYWNINLKEMIEAGVHFGHGIKKWNPKMAPYISAKRKGTHITNLARTTRFLSEACDLVFDAASQGKSFLIVGTKKRAADLVASAAIRARCHYVNKKWFSGMLTNWSITKTRLSQFRDLRAEEKMEKFHHLPKRDVAILKRKLSTLQRYLGGIKYMTRLPDIVIVLDQQKEYIALRECAILGIPTISLADTNCDPDLANISIPANDDTMTSIRLILNKLVFAICEGRSLYIRNH</sequence>
<accession>P0C482</accession>
<accession>P12145</accession>
<accession>Q6QY17</accession>
<accession>Q6QY80</accession>
<evidence type="ECO:0000305" key="1"/>
<geneLocation type="chloroplast"/>
<organism>
    <name type="scientific">Oryza sativa subsp. japonica</name>
    <name type="common">Rice</name>
    <dbReference type="NCBI Taxonomy" id="39947"/>
    <lineage>
        <taxon>Eukaryota</taxon>
        <taxon>Viridiplantae</taxon>
        <taxon>Streptophyta</taxon>
        <taxon>Embryophyta</taxon>
        <taxon>Tracheophyta</taxon>
        <taxon>Spermatophyta</taxon>
        <taxon>Magnoliopsida</taxon>
        <taxon>Liliopsida</taxon>
        <taxon>Poales</taxon>
        <taxon>Poaceae</taxon>
        <taxon>BOP clade</taxon>
        <taxon>Oryzoideae</taxon>
        <taxon>Oryzeae</taxon>
        <taxon>Oryzinae</taxon>
        <taxon>Oryza</taxon>
        <taxon>Oryza sativa</taxon>
    </lineage>
</organism>
<name>RR2_ORYSJ</name>
<protein>
    <recommendedName>
        <fullName evidence="1">Small ribosomal subunit protein uS2c</fullName>
    </recommendedName>
    <alternativeName>
        <fullName>30S ribosomal protein S2, chloroplastic</fullName>
    </alternativeName>
</protein>
<gene>
    <name type="primary">rps2</name>
    <name type="ordered locus">LOC_Osp1g00270</name>
    <name type="ORF">Nip040</name>
</gene>